<organism>
    <name type="scientific">Karoophasma botterkloofense</name>
    <name type="common">Gladiator</name>
    <name type="synonym">Heel-walker</name>
    <dbReference type="NCBI Taxonomy" id="253132"/>
    <lineage>
        <taxon>Eukaryota</taxon>
        <taxon>Metazoa</taxon>
        <taxon>Ecdysozoa</taxon>
        <taxon>Arthropoda</taxon>
        <taxon>Hexapoda</taxon>
        <taxon>Insecta</taxon>
        <taxon>Pterygota</taxon>
        <taxon>Neoptera</taxon>
        <taxon>Polyneoptera</taxon>
        <taxon>Mantophasmatodea</taxon>
        <taxon>Austrophasmatidae</taxon>
        <taxon>Karoophasma</taxon>
    </lineage>
</organism>
<proteinExistence type="evidence at protein level"/>
<comment type="function">
    <text evidence="1">FMRFamides and FMRFamide-like peptides are neuropeptides.</text>
</comment>
<comment type="subcellular location">
    <subcellularLocation>
        <location evidence="6">Secreted</location>
    </subcellularLocation>
</comment>
<comment type="similarity">
    <text evidence="2">Belongs to the FARP (FMRF amide related peptide) family.</text>
</comment>
<sequence length="7" mass="834">AQSFLRL</sequence>
<reference evidence="5" key="1">
    <citation type="journal article" date="2012" name="Syst. Biol.">
        <title>Peptidomics-based phylogeny and biogeography of Mantophasmatodea (Hexapoda).</title>
        <authorList>
            <person name="Predel R."/>
            <person name="Neupert S."/>
            <person name="Huetteroth W."/>
            <person name="Kahnt J."/>
            <person name="Waidelich D."/>
            <person name="Roth S."/>
        </authorList>
    </citation>
    <scope>PROTEIN SEQUENCE</scope>
    <scope>AMIDATION AT LEU-7</scope>
    <source>
        <tissue evidence="3">Thoracic perisympathetic organs</tissue>
    </source>
</reference>
<evidence type="ECO:0000250" key="1">
    <source>
        <dbReference type="UniProtKB" id="P34405"/>
    </source>
</evidence>
<evidence type="ECO:0000255" key="2"/>
<evidence type="ECO:0000269" key="3">
    <source>
    </source>
</evidence>
<evidence type="ECO:0000303" key="4">
    <source>
    </source>
</evidence>
<evidence type="ECO:0000305" key="5"/>
<evidence type="ECO:0000305" key="6">
    <source>
    </source>
</evidence>
<protein>
    <recommendedName>
        <fullName evidence="4">Extended FMRFamide-1</fullName>
        <shortName evidence="4">FMRFa-1</shortName>
    </recommendedName>
</protein>
<accession>B0M3E7</accession>
<feature type="peptide" id="PRO_0000421479" description="Extended FMRFamide-1" evidence="3">
    <location>
        <begin position="1"/>
        <end position="7"/>
    </location>
</feature>
<feature type="modified residue" description="Leucine amide" evidence="3">
    <location>
        <position position="7"/>
    </location>
</feature>
<feature type="unsure residue" description="L or I" evidence="3">
    <location>
        <position position="5"/>
    </location>
</feature>
<feature type="unsure residue" description="L or I" evidence="3">
    <location>
        <position position="7"/>
    </location>
</feature>
<keyword id="KW-0027">Amidation</keyword>
<keyword id="KW-0903">Direct protein sequencing</keyword>
<keyword id="KW-0527">Neuropeptide</keyword>
<keyword id="KW-0964">Secreted</keyword>
<name>FAR1_KARBO</name>
<dbReference type="GO" id="GO:0005576">
    <property type="term" value="C:extracellular region"/>
    <property type="evidence" value="ECO:0007669"/>
    <property type="project" value="UniProtKB-SubCell"/>
</dbReference>
<dbReference type="GO" id="GO:0007218">
    <property type="term" value="P:neuropeptide signaling pathway"/>
    <property type="evidence" value="ECO:0007669"/>
    <property type="project" value="UniProtKB-KW"/>
</dbReference>